<keyword id="KW-0687">Ribonucleoprotein</keyword>
<keyword id="KW-0689">Ribosomal protein</keyword>
<keyword id="KW-0694">RNA-binding</keyword>
<keyword id="KW-0699">rRNA-binding</keyword>
<sequence>MANVTLFDQTGKEAGQVVLNDAVFGIEPNESVVFDVIISQRASLRQGTHAVKNRSAVSGGGRKPWRQKGTGRARQGSIRSPQWRGGGVVFGPTPRSYGYKLPQKVRRLALKSVYSEKVAENKFVAVDALSFTAPKTAEFAKVLAALSIDSKVLVILEEGNEFAALSARNLPNVKVATATTASVLDIANSDKLLVTQAAISKIEEVLA</sequence>
<evidence type="ECO:0000255" key="1">
    <source>
        <dbReference type="HAMAP-Rule" id="MF_01328"/>
    </source>
</evidence>
<evidence type="ECO:0000256" key="2">
    <source>
        <dbReference type="SAM" id="MobiDB-lite"/>
    </source>
</evidence>
<evidence type="ECO:0000305" key="3"/>
<reference key="1">
    <citation type="journal article" date="2009" name="J. Bacteriol.">
        <title>Role of conjugative elements in the evolution of the multidrug-resistant pandemic clone Streptococcus pneumoniae Spain23F ST81.</title>
        <authorList>
            <person name="Croucher N.J."/>
            <person name="Walker D."/>
            <person name="Romero P."/>
            <person name="Lennard N."/>
            <person name="Paterson G.K."/>
            <person name="Bason N.C."/>
            <person name="Mitchell A.M."/>
            <person name="Quail M.A."/>
            <person name="Andrew P.W."/>
            <person name="Parkhill J."/>
            <person name="Bentley S.D."/>
            <person name="Mitchell T.J."/>
        </authorList>
    </citation>
    <scope>NUCLEOTIDE SEQUENCE [LARGE SCALE GENOMIC DNA]</scope>
    <source>
        <strain>ATCC 700669 / Spain 23F-1</strain>
    </source>
</reference>
<proteinExistence type="inferred from homology"/>
<protein>
    <recommendedName>
        <fullName evidence="1">Large ribosomal subunit protein uL4</fullName>
    </recommendedName>
    <alternativeName>
        <fullName evidence="3">50S ribosomal protein L4</fullName>
    </alternativeName>
</protein>
<accession>B8ZKF8</accession>
<feature type="chain" id="PRO_1000166027" description="Large ribosomal subunit protein uL4">
    <location>
        <begin position="1"/>
        <end position="207"/>
    </location>
</feature>
<feature type="region of interest" description="Disordered" evidence="2">
    <location>
        <begin position="49"/>
        <end position="78"/>
    </location>
</feature>
<name>RL4_STRPJ</name>
<gene>
    <name evidence="1" type="primary">rplD</name>
    <name type="ordered locus">SPN23F02000</name>
</gene>
<comment type="function">
    <text evidence="1">One of the primary rRNA binding proteins, this protein initially binds near the 5'-end of the 23S rRNA. It is important during the early stages of 50S assembly. It makes multiple contacts with different domains of the 23S rRNA in the assembled 50S subunit and ribosome.</text>
</comment>
<comment type="function">
    <text evidence="1">Forms part of the polypeptide exit tunnel.</text>
</comment>
<comment type="subunit">
    <text evidence="1">Part of the 50S ribosomal subunit.</text>
</comment>
<comment type="similarity">
    <text evidence="1">Belongs to the universal ribosomal protein uL4 family.</text>
</comment>
<dbReference type="EMBL" id="FM211187">
    <property type="protein sequence ID" value="CAR68060.1"/>
    <property type="molecule type" value="Genomic_DNA"/>
</dbReference>
<dbReference type="RefSeq" id="WP_000024537.1">
    <property type="nucleotide sequence ID" value="NC_011900.1"/>
</dbReference>
<dbReference type="SMR" id="B8ZKF8"/>
<dbReference type="KEGG" id="sne:SPN23F02000"/>
<dbReference type="HOGENOM" id="CLU_041575_5_2_9"/>
<dbReference type="GO" id="GO:1990904">
    <property type="term" value="C:ribonucleoprotein complex"/>
    <property type="evidence" value="ECO:0007669"/>
    <property type="project" value="UniProtKB-KW"/>
</dbReference>
<dbReference type="GO" id="GO:0005840">
    <property type="term" value="C:ribosome"/>
    <property type="evidence" value="ECO:0007669"/>
    <property type="project" value="UniProtKB-KW"/>
</dbReference>
<dbReference type="GO" id="GO:0019843">
    <property type="term" value="F:rRNA binding"/>
    <property type="evidence" value="ECO:0007669"/>
    <property type="project" value="UniProtKB-UniRule"/>
</dbReference>
<dbReference type="GO" id="GO:0003735">
    <property type="term" value="F:structural constituent of ribosome"/>
    <property type="evidence" value="ECO:0007669"/>
    <property type="project" value="InterPro"/>
</dbReference>
<dbReference type="GO" id="GO:0006412">
    <property type="term" value="P:translation"/>
    <property type="evidence" value="ECO:0007669"/>
    <property type="project" value="UniProtKB-UniRule"/>
</dbReference>
<dbReference type="FunFam" id="3.40.1370.10:FF:000003">
    <property type="entry name" value="50S ribosomal protein L4"/>
    <property type="match status" value="1"/>
</dbReference>
<dbReference type="Gene3D" id="3.40.1370.10">
    <property type="match status" value="1"/>
</dbReference>
<dbReference type="HAMAP" id="MF_01328_B">
    <property type="entry name" value="Ribosomal_uL4_B"/>
    <property type="match status" value="1"/>
</dbReference>
<dbReference type="InterPro" id="IPR002136">
    <property type="entry name" value="Ribosomal_uL4"/>
</dbReference>
<dbReference type="InterPro" id="IPR013005">
    <property type="entry name" value="Ribosomal_uL4-like"/>
</dbReference>
<dbReference type="InterPro" id="IPR023574">
    <property type="entry name" value="Ribosomal_uL4_dom_sf"/>
</dbReference>
<dbReference type="NCBIfam" id="TIGR03953">
    <property type="entry name" value="rplD_bact"/>
    <property type="match status" value="1"/>
</dbReference>
<dbReference type="PANTHER" id="PTHR10746">
    <property type="entry name" value="50S RIBOSOMAL PROTEIN L4"/>
    <property type="match status" value="1"/>
</dbReference>
<dbReference type="PANTHER" id="PTHR10746:SF6">
    <property type="entry name" value="LARGE RIBOSOMAL SUBUNIT PROTEIN UL4M"/>
    <property type="match status" value="1"/>
</dbReference>
<dbReference type="Pfam" id="PF00573">
    <property type="entry name" value="Ribosomal_L4"/>
    <property type="match status" value="1"/>
</dbReference>
<dbReference type="SUPFAM" id="SSF52166">
    <property type="entry name" value="Ribosomal protein L4"/>
    <property type="match status" value="1"/>
</dbReference>
<organism>
    <name type="scientific">Streptococcus pneumoniae (strain ATCC 700669 / Spain 23F-1)</name>
    <dbReference type="NCBI Taxonomy" id="561276"/>
    <lineage>
        <taxon>Bacteria</taxon>
        <taxon>Bacillati</taxon>
        <taxon>Bacillota</taxon>
        <taxon>Bacilli</taxon>
        <taxon>Lactobacillales</taxon>
        <taxon>Streptococcaceae</taxon>
        <taxon>Streptococcus</taxon>
    </lineage>
</organism>